<sequence>MTAITDIIAREILDSRGNPTVEVDVYLEDGSMGRAAVPSGASTGAHEAVELRDGGKRYLGKGVEKAVEAANTEIFDAIGGIDAENQIQIDNIMIELDGTPNKSRLGANAILGVSLAVAKAAAQASGLPLYRYVGGASASLLPVPMMNIINGGAHADNPIDFQEFMILPVGADTIAEAVRMGSEVFHTLRKELAAQGHNTNVGDEGGFAPGLKSASEALDFIVKSVEKAGYKPGEDIYLGLDCASTEFFKDGKYVLEGEGRTLESGAMAEYLAELAAKYPIISIEDGMAEDDWDGWKALTDLAGKKIQLVGDDLFVTNSARLRDGIRMGVANSILVKVNQIGSLTETLDAVNTAHKAAYTAVMSHRSGETEDSTIADLAVATNCGQIKTGSLSRSDRLAKYNQLIRIEEGLGPQAQYAGRSIIRG</sequence>
<accession>Q2K8W9</accession>
<comment type="function">
    <text evidence="1">Catalyzes the reversible conversion of 2-phosphoglycerate (2-PG) into phosphoenolpyruvate (PEP). It is essential for the degradation of carbohydrates via glycolysis.</text>
</comment>
<comment type="catalytic activity">
    <reaction evidence="1">
        <text>(2R)-2-phosphoglycerate = phosphoenolpyruvate + H2O</text>
        <dbReference type="Rhea" id="RHEA:10164"/>
        <dbReference type="ChEBI" id="CHEBI:15377"/>
        <dbReference type="ChEBI" id="CHEBI:58289"/>
        <dbReference type="ChEBI" id="CHEBI:58702"/>
        <dbReference type="EC" id="4.2.1.11"/>
    </reaction>
</comment>
<comment type="cofactor">
    <cofactor evidence="1">
        <name>Mg(2+)</name>
        <dbReference type="ChEBI" id="CHEBI:18420"/>
    </cofactor>
    <text evidence="1">Binds a second Mg(2+) ion via substrate during catalysis.</text>
</comment>
<comment type="pathway">
    <text evidence="1">Carbohydrate degradation; glycolysis; pyruvate from D-glyceraldehyde 3-phosphate: step 4/5.</text>
</comment>
<comment type="subcellular location">
    <subcellularLocation>
        <location evidence="1">Cytoplasm</location>
    </subcellularLocation>
    <subcellularLocation>
        <location evidence="1">Secreted</location>
    </subcellularLocation>
    <subcellularLocation>
        <location evidence="1">Cell surface</location>
    </subcellularLocation>
    <text evidence="1">Fractions of enolase are present in both the cytoplasm and on the cell surface.</text>
</comment>
<comment type="similarity">
    <text evidence="1">Belongs to the enolase family.</text>
</comment>
<name>ENO_RHIEC</name>
<protein>
    <recommendedName>
        <fullName evidence="1">Enolase</fullName>
        <ecNumber evidence="1">4.2.1.11</ecNumber>
    </recommendedName>
    <alternativeName>
        <fullName evidence="1">2-phospho-D-glycerate hydro-lyase</fullName>
    </alternativeName>
    <alternativeName>
        <fullName evidence="1">2-phosphoglycerate dehydratase</fullName>
    </alternativeName>
</protein>
<reference key="1">
    <citation type="journal article" date="2006" name="Proc. Natl. Acad. Sci. U.S.A.">
        <title>The partitioned Rhizobium etli genome: genetic and metabolic redundancy in seven interacting replicons.</title>
        <authorList>
            <person name="Gonzalez V."/>
            <person name="Santamaria R.I."/>
            <person name="Bustos P."/>
            <person name="Hernandez-Gonzalez I."/>
            <person name="Medrano-Soto A."/>
            <person name="Moreno-Hagelsieb G."/>
            <person name="Janga S.C."/>
            <person name="Ramirez M.A."/>
            <person name="Jimenez-Jacinto V."/>
            <person name="Collado-Vides J."/>
            <person name="Davila G."/>
        </authorList>
    </citation>
    <scope>NUCLEOTIDE SEQUENCE [LARGE SCALE GENOMIC DNA]</scope>
    <source>
        <strain>ATCC 51251 / DSM 11541 / JCM 21823 / NBRC 15573 / CFN 42</strain>
    </source>
</reference>
<organism>
    <name type="scientific">Rhizobium etli (strain ATCC 51251 / DSM 11541 / JCM 21823 / NBRC 15573 / CFN 42)</name>
    <dbReference type="NCBI Taxonomy" id="347834"/>
    <lineage>
        <taxon>Bacteria</taxon>
        <taxon>Pseudomonadati</taxon>
        <taxon>Pseudomonadota</taxon>
        <taxon>Alphaproteobacteria</taxon>
        <taxon>Hyphomicrobiales</taxon>
        <taxon>Rhizobiaceae</taxon>
        <taxon>Rhizobium/Agrobacterium group</taxon>
        <taxon>Rhizobium</taxon>
    </lineage>
</organism>
<keyword id="KW-0963">Cytoplasm</keyword>
<keyword id="KW-0324">Glycolysis</keyword>
<keyword id="KW-0456">Lyase</keyword>
<keyword id="KW-0460">Magnesium</keyword>
<keyword id="KW-0479">Metal-binding</keyword>
<keyword id="KW-1185">Reference proteome</keyword>
<keyword id="KW-0964">Secreted</keyword>
<dbReference type="EC" id="4.2.1.11" evidence="1"/>
<dbReference type="EMBL" id="CP000133">
    <property type="protein sequence ID" value="ABC90717.1"/>
    <property type="molecule type" value="Genomic_DNA"/>
</dbReference>
<dbReference type="RefSeq" id="WP_004678645.1">
    <property type="nucleotide sequence ID" value="NC_007761.1"/>
</dbReference>
<dbReference type="SMR" id="Q2K8W9"/>
<dbReference type="GeneID" id="45957359"/>
<dbReference type="KEGG" id="ret:RHE_CH01931"/>
<dbReference type="eggNOG" id="COG0148">
    <property type="taxonomic scope" value="Bacteria"/>
</dbReference>
<dbReference type="HOGENOM" id="CLU_031223_2_1_5"/>
<dbReference type="OrthoDB" id="9804716at2"/>
<dbReference type="UniPathway" id="UPA00109">
    <property type="reaction ID" value="UER00187"/>
</dbReference>
<dbReference type="Proteomes" id="UP000001936">
    <property type="component" value="Chromosome"/>
</dbReference>
<dbReference type="GO" id="GO:0009986">
    <property type="term" value="C:cell surface"/>
    <property type="evidence" value="ECO:0007669"/>
    <property type="project" value="UniProtKB-SubCell"/>
</dbReference>
<dbReference type="GO" id="GO:0005576">
    <property type="term" value="C:extracellular region"/>
    <property type="evidence" value="ECO:0007669"/>
    <property type="project" value="UniProtKB-SubCell"/>
</dbReference>
<dbReference type="GO" id="GO:0000015">
    <property type="term" value="C:phosphopyruvate hydratase complex"/>
    <property type="evidence" value="ECO:0007669"/>
    <property type="project" value="InterPro"/>
</dbReference>
<dbReference type="GO" id="GO:0000287">
    <property type="term" value="F:magnesium ion binding"/>
    <property type="evidence" value="ECO:0007669"/>
    <property type="project" value="UniProtKB-UniRule"/>
</dbReference>
<dbReference type="GO" id="GO:0004634">
    <property type="term" value="F:phosphopyruvate hydratase activity"/>
    <property type="evidence" value="ECO:0007669"/>
    <property type="project" value="UniProtKB-UniRule"/>
</dbReference>
<dbReference type="GO" id="GO:0006096">
    <property type="term" value="P:glycolytic process"/>
    <property type="evidence" value="ECO:0007669"/>
    <property type="project" value="UniProtKB-UniRule"/>
</dbReference>
<dbReference type="CDD" id="cd03313">
    <property type="entry name" value="enolase"/>
    <property type="match status" value="1"/>
</dbReference>
<dbReference type="FunFam" id="3.20.20.120:FF:000001">
    <property type="entry name" value="Enolase"/>
    <property type="match status" value="1"/>
</dbReference>
<dbReference type="FunFam" id="3.30.390.10:FF:000001">
    <property type="entry name" value="Enolase"/>
    <property type="match status" value="1"/>
</dbReference>
<dbReference type="Gene3D" id="3.20.20.120">
    <property type="entry name" value="Enolase-like C-terminal domain"/>
    <property type="match status" value="1"/>
</dbReference>
<dbReference type="Gene3D" id="3.30.390.10">
    <property type="entry name" value="Enolase-like, N-terminal domain"/>
    <property type="match status" value="1"/>
</dbReference>
<dbReference type="HAMAP" id="MF_00318">
    <property type="entry name" value="Enolase"/>
    <property type="match status" value="1"/>
</dbReference>
<dbReference type="InterPro" id="IPR000941">
    <property type="entry name" value="Enolase"/>
</dbReference>
<dbReference type="InterPro" id="IPR036849">
    <property type="entry name" value="Enolase-like_C_sf"/>
</dbReference>
<dbReference type="InterPro" id="IPR029017">
    <property type="entry name" value="Enolase-like_N"/>
</dbReference>
<dbReference type="InterPro" id="IPR020810">
    <property type="entry name" value="Enolase_C"/>
</dbReference>
<dbReference type="InterPro" id="IPR020809">
    <property type="entry name" value="Enolase_CS"/>
</dbReference>
<dbReference type="InterPro" id="IPR020811">
    <property type="entry name" value="Enolase_N"/>
</dbReference>
<dbReference type="NCBIfam" id="TIGR01060">
    <property type="entry name" value="eno"/>
    <property type="match status" value="1"/>
</dbReference>
<dbReference type="PANTHER" id="PTHR11902">
    <property type="entry name" value="ENOLASE"/>
    <property type="match status" value="1"/>
</dbReference>
<dbReference type="PANTHER" id="PTHR11902:SF1">
    <property type="entry name" value="ENOLASE"/>
    <property type="match status" value="1"/>
</dbReference>
<dbReference type="Pfam" id="PF00113">
    <property type="entry name" value="Enolase_C"/>
    <property type="match status" value="1"/>
</dbReference>
<dbReference type="Pfam" id="PF03952">
    <property type="entry name" value="Enolase_N"/>
    <property type="match status" value="1"/>
</dbReference>
<dbReference type="PIRSF" id="PIRSF001400">
    <property type="entry name" value="Enolase"/>
    <property type="match status" value="1"/>
</dbReference>
<dbReference type="PRINTS" id="PR00148">
    <property type="entry name" value="ENOLASE"/>
</dbReference>
<dbReference type="SFLD" id="SFLDF00002">
    <property type="entry name" value="enolase"/>
    <property type="match status" value="1"/>
</dbReference>
<dbReference type="SFLD" id="SFLDG00178">
    <property type="entry name" value="enolase"/>
    <property type="match status" value="1"/>
</dbReference>
<dbReference type="SMART" id="SM01192">
    <property type="entry name" value="Enolase_C"/>
    <property type="match status" value="1"/>
</dbReference>
<dbReference type="SMART" id="SM01193">
    <property type="entry name" value="Enolase_N"/>
    <property type="match status" value="1"/>
</dbReference>
<dbReference type="SUPFAM" id="SSF51604">
    <property type="entry name" value="Enolase C-terminal domain-like"/>
    <property type="match status" value="1"/>
</dbReference>
<dbReference type="SUPFAM" id="SSF54826">
    <property type="entry name" value="Enolase N-terminal domain-like"/>
    <property type="match status" value="1"/>
</dbReference>
<dbReference type="PROSITE" id="PS00164">
    <property type="entry name" value="ENOLASE"/>
    <property type="match status" value="1"/>
</dbReference>
<proteinExistence type="inferred from homology"/>
<evidence type="ECO:0000255" key="1">
    <source>
        <dbReference type="HAMAP-Rule" id="MF_00318"/>
    </source>
</evidence>
<feature type="chain" id="PRO_0000267086" description="Enolase">
    <location>
        <begin position="1"/>
        <end position="424"/>
    </location>
</feature>
<feature type="active site" description="Proton donor" evidence="1">
    <location>
        <position position="204"/>
    </location>
</feature>
<feature type="active site" description="Proton acceptor" evidence="1">
    <location>
        <position position="336"/>
    </location>
</feature>
<feature type="binding site" evidence="1">
    <location>
        <position position="162"/>
    </location>
    <ligand>
        <name>(2R)-2-phosphoglycerate</name>
        <dbReference type="ChEBI" id="CHEBI:58289"/>
    </ligand>
</feature>
<feature type="binding site" evidence="1">
    <location>
        <position position="241"/>
    </location>
    <ligand>
        <name>Mg(2+)</name>
        <dbReference type="ChEBI" id="CHEBI:18420"/>
    </ligand>
</feature>
<feature type="binding site" evidence="1">
    <location>
        <position position="284"/>
    </location>
    <ligand>
        <name>Mg(2+)</name>
        <dbReference type="ChEBI" id="CHEBI:18420"/>
    </ligand>
</feature>
<feature type="binding site" evidence="1">
    <location>
        <position position="311"/>
    </location>
    <ligand>
        <name>Mg(2+)</name>
        <dbReference type="ChEBI" id="CHEBI:18420"/>
    </ligand>
</feature>
<feature type="binding site" evidence="1">
    <location>
        <position position="336"/>
    </location>
    <ligand>
        <name>(2R)-2-phosphoglycerate</name>
        <dbReference type="ChEBI" id="CHEBI:58289"/>
    </ligand>
</feature>
<feature type="binding site" evidence="1">
    <location>
        <position position="365"/>
    </location>
    <ligand>
        <name>(2R)-2-phosphoglycerate</name>
        <dbReference type="ChEBI" id="CHEBI:58289"/>
    </ligand>
</feature>
<feature type="binding site" evidence="1">
    <location>
        <position position="366"/>
    </location>
    <ligand>
        <name>(2R)-2-phosphoglycerate</name>
        <dbReference type="ChEBI" id="CHEBI:58289"/>
    </ligand>
</feature>
<feature type="binding site" evidence="1">
    <location>
        <position position="387"/>
    </location>
    <ligand>
        <name>(2R)-2-phosphoglycerate</name>
        <dbReference type="ChEBI" id="CHEBI:58289"/>
    </ligand>
</feature>
<gene>
    <name evidence="1" type="primary">eno</name>
    <name type="ordered locus">RHE_CH01931</name>
</gene>